<sequence>MKRKLDANDVPSPEAADKKEKKEEDDADFESLNLDPRLRQALIKEKFTKPTLVQAKAIPLALEGKDILARAKTGSGKTAAYVLPILQTILQKKATDPSFKATTGLILVPTRELAEQVQNVVTTFAAFCGKDVRSVNLTQKVSDAVQRTMLADYPDLVVSTPARVVTNLGSSALSLENLTHLVIDEADLVLSYGYEEDINALAKAIPRGVQTFLMSATLTDEVDTLKGLFCRSPVTLKLEDKDDQGAGVSQFVVRCAEDEKFLLTYVIFKLQLIKGKVIIFVDDVDRCYRVKLFLEQFGIKSCVLNSELPINSRIHVVQEFNKGVYDILIAADEQEVIGARKSKKSKETEEAGSSDEDEGEPEDKSKRRKVSGKEKDYGISRGIDFQNVACVLNFDLPSTSKSYTHRIGRTGRAGKTGMALSFVIPKDQHGKHRPTSTATSKHDESVLAKIVKRQGKLGHEVKPYHFEMKQVEAFRYRMTDALRAVTRLAVQEARAREIRQELIKSEKLKRHFEENPEELRQLRHDDELRSARVQPHLKHIPEYLMPAKGKKGLSSGDVGFVSFRKQNENRIRKAREKNRGKGNGRKFAGVKKKVDPLKTFNRGRK</sequence>
<evidence type="ECO:0000250" key="1"/>
<evidence type="ECO:0000255" key="2">
    <source>
        <dbReference type="PROSITE-ProRule" id="PRU00541"/>
    </source>
</evidence>
<evidence type="ECO:0000255" key="3">
    <source>
        <dbReference type="PROSITE-ProRule" id="PRU00542"/>
    </source>
</evidence>
<evidence type="ECO:0000256" key="4">
    <source>
        <dbReference type="SAM" id="MobiDB-lite"/>
    </source>
</evidence>
<evidence type="ECO:0000305" key="5"/>
<keyword id="KW-0067">ATP-binding</keyword>
<keyword id="KW-0347">Helicase</keyword>
<keyword id="KW-0378">Hydrolase</keyword>
<keyword id="KW-0547">Nucleotide-binding</keyword>
<keyword id="KW-0539">Nucleus</keyword>
<keyword id="KW-1185">Reference proteome</keyword>
<keyword id="KW-0690">Ribosome biogenesis</keyword>
<keyword id="KW-0694">RNA-binding</keyword>
<keyword id="KW-0698">rRNA processing</keyword>
<comment type="function">
    <text evidence="1">ATP-binding RNA helicase involved in the biogenesis of 60S ribosomal subunits and is required for the normal formation of 25S and 5.8S rRNAs.</text>
</comment>
<comment type="catalytic activity">
    <reaction>
        <text>ATP + H2O = ADP + phosphate + H(+)</text>
        <dbReference type="Rhea" id="RHEA:13065"/>
        <dbReference type="ChEBI" id="CHEBI:15377"/>
        <dbReference type="ChEBI" id="CHEBI:15378"/>
        <dbReference type="ChEBI" id="CHEBI:30616"/>
        <dbReference type="ChEBI" id="CHEBI:43474"/>
        <dbReference type="ChEBI" id="CHEBI:456216"/>
        <dbReference type="EC" id="3.6.4.13"/>
    </reaction>
</comment>
<comment type="subcellular location">
    <subcellularLocation>
        <location evidence="1">Nucleus</location>
        <location evidence="1">Nucleolus</location>
    </subcellularLocation>
</comment>
<comment type="domain">
    <text>The Q motif is unique to and characteristic of the DEAD box family of RNA helicases and controls ATP binding and hydrolysis.</text>
</comment>
<comment type="similarity">
    <text evidence="5">Belongs to the DEAD box helicase family. DDX56/DBP9 subfamily.</text>
</comment>
<reference key="1">
    <citation type="journal article" date="2005" name="Nature">
        <title>Genome sequencing and analysis of Aspergillus oryzae.</title>
        <authorList>
            <person name="Machida M."/>
            <person name="Asai K."/>
            <person name="Sano M."/>
            <person name="Tanaka T."/>
            <person name="Kumagai T."/>
            <person name="Terai G."/>
            <person name="Kusumoto K."/>
            <person name="Arima T."/>
            <person name="Akita O."/>
            <person name="Kashiwagi Y."/>
            <person name="Abe K."/>
            <person name="Gomi K."/>
            <person name="Horiuchi H."/>
            <person name="Kitamoto K."/>
            <person name="Kobayashi T."/>
            <person name="Takeuchi M."/>
            <person name="Denning D.W."/>
            <person name="Galagan J.E."/>
            <person name="Nierman W.C."/>
            <person name="Yu J."/>
            <person name="Archer D.B."/>
            <person name="Bennett J.W."/>
            <person name="Bhatnagar D."/>
            <person name="Cleveland T.E."/>
            <person name="Fedorova N.D."/>
            <person name="Gotoh O."/>
            <person name="Horikawa H."/>
            <person name="Hosoyama A."/>
            <person name="Ichinomiya M."/>
            <person name="Igarashi R."/>
            <person name="Iwashita K."/>
            <person name="Juvvadi P.R."/>
            <person name="Kato M."/>
            <person name="Kato Y."/>
            <person name="Kin T."/>
            <person name="Kokubun A."/>
            <person name="Maeda H."/>
            <person name="Maeyama N."/>
            <person name="Maruyama J."/>
            <person name="Nagasaki H."/>
            <person name="Nakajima T."/>
            <person name="Oda K."/>
            <person name="Okada K."/>
            <person name="Paulsen I."/>
            <person name="Sakamoto K."/>
            <person name="Sawano T."/>
            <person name="Takahashi M."/>
            <person name="Takase K."/>
            <person name="Terabayashi Y."/>
            <person name="Wortman J.R."/>
            <person name="Yamada O."/>
            <person name="Yamagata Y."/>
            <person name="Anazawa H."/>
            <person name="Hata Y."/>
            <person name="Koide Y."/>
            <person name="Komori T."/>
            <person name="Koyama Y."/>
            <person name="Minetoki T."/>
            <person name="Suharnan S."/>
            <person name="Tanaka A."/>
            <person name="Isono K."/>
            <person name="Kuhara S."/>
            <person name="Ogasawara N."/>
            <person name="Kikuchi H."/>
        </authorList>
    </citation>
    <scope>NUCLEOTIDE SEQUENCE [LARGE SCALE GENOMIC DNA]</scope>
    <source>
        <strain>ATCC 42149 / RIB 40</strain>
    </source>
</reference>
<proteinExistence type="inferred from homology"/>
<gene>
    <name type="primary">dbp9</name>
    <name type="ORF">AO090026000163</name>
</gene>
<accession>Q2UFL0</accession>
<dbReference type="EC" id="3.6.4.13"/>
<dbReference type="EMBL" id="BA000051">
    <property type="protein sequence ID" value="BAE59655.1"/>
    <property type="molecule type" value="Genomic_DNA"/>
</dbReference>
<dbReference type="RefSeq" id="XP_001821657.1">
    <property type="nucleotide sequence ID" value="XM_001821605.1"/>
</dbReference>
<dbReference type="SMR" id="Q2UFL0"/>
<dbReference type="STRING" id="510516.Q2UFL0"/>
<dbReference type="EnsemblFungi" id="BAE59655">
    <property type="protein sequence ID" value="BAE59655"/>
    <property type="gene ID" value="AO090026000163"/>
</dbReference>
<dbReference type="GeneID" id="5993685"/>
<dbReference type="KEGG" id="aor:AO090026000163"/>
<dbReference type="VEuPathDB" id="FungiDB:AO090026000163"/>
<dbReference type="HOGENOM" id="CLU_003041_17_1_1"/>
<dbReference type="OMA" id="NASEQCV"/>
<dbReference type="OrthoDB" id="96911at5052"/>
<dbReference type="Proteomes" id="UP000006564">
    <property type="component" value="Chromosome 3"/>
</dbReference>
<dbReference type="GO" id="GO:0005829">
    <property type="term" value="C:cytosol"/>
    <property type="evidence" value="ECO:0007669"/>
    <property type="project" value="TreeGrafter"/>
</dbReference>
<dbReference type="GO" id="GO:0005730">
    <property type="term" value="C:nucleolus"/>
    <property type="evidence" value="ECO:0007669"/>
    <property type="project" value="UniProtKB-SubCell"/>
</dbReference>
<dbReference type="GO" id="GO:0005524">
    <property type="term" value="F:ATP binding"/>
    <property type="evidence" value="ECO:0007669"/>
    <property type="project" value="UniProtKB-KW"/>
</dbReference>
<dbReference type="GO" id="GO:0016887">
    <property type="term" value="F:ATP hydrolysis activity"/>
    <property type="evidence" value="ECO:0007669"/>
    <property type="project" value="RHEA"/>
</dbReference>
<dbReference type="GO" id="GO:0003678">
    <property type="term" value="F:DNA helicase activity"/>
    <property type="evidence" value="ECO:0007669"/>
    <property type="project" value="EnsemblFungi"/>
</dbReference>
<dbReference type="GO" id="GO:0033677">
    <property type="term" value="F:DNA/RNA helicase activity"/>
    <property type="evidence" value="ECO:0007669"/>
    <property type="project" value="EnsemblFungi"/>
</dbReference>
<dbReference type="GO" id="GO:0003723">
    <property type="term" value="F:RNA binding"/>
    <property type="evidence" value="ECO:0007669"/>
    <property type="project" value="UniProtKB-KW"/>
</dbReference>
<dbReference type="GO" id="GO:0003724">
    <property type="term" value="F:RNA helicase activity"/>
    <property type="evidence" value="ECO:0007669"/>
    <property type="project" value="UniProtKB-EC"/>
</dbReference>
<dbReference type="GO" id="GO:0000463">
    <property type="term" value="P:maturation of LSU-rRNA from tricistronic rRNA transcript (SSU-rRNA, 5.8S rRNA, LSU-rRNA)"/>
    <property type="evidence" value="ECO:0007669"/>
    <property type="project" value="EnsemblFungi"/>
</dbReference>
<dbReference type="CDD" id="cd17961">
    <property type="entry name" value="DEADc_DDX56"/>
    <property type="match status" value="1"/>
</dbReference>
<dbReference type="CDD" id="cd18787">
    <property type="entry name" value="SF2_C_DEAD"/>
    <property type="match status" value="1"/>
</dbReference>
<dbReference type="Gene3D" id="3.40.50.300">
    <property type="entry name" value="P-loop containing nucleotide triphosphate hydrolases"/>
    <property type="match status" value="2"/>
</dbReference>
<dbReference type="InterPro" id="IPR011545">
    <property type="entry name" value="DEAD/DEAH_box_helicase_dom"/>
</dbReference>
<dbReference type="InterPro" id="IPR050079">
    <property type="entry name" value="DEAD_box_RNA_helicase"/>
</dbReference>
<dbReference type="InterPro" id="IPR014001">
    <property type="entry name" value="Helicase_ATP-bd"/>
</dbReference>
<dbReference type="InterPro" id="IPR001650">
    <property type="entry name" value="Helicase_C-like"/>
</dbReference>
<dbReference type="InterPro" id="IPR027417">
    <property type="entry name" value="P-loop_NTPase"/>
</dbReference>
<dbReference type="InterPro" id="IPR014014">
    <property type="entry name" value="RNA_helicase_DEAD_Q_motif"/>
</dbReference>
<dbReference type="PANTHER" id="PTHR47959">
    <property type="entry name" value="ATP-DEPENDENT RNA HELICASE RHLE-RELATED"/>
    <property type="match status" value="1"/>
</dbReference>
<dbReference type="PANTHER" id="PTHR47959:SF21">
    <property type="entry name" value="DEAD-BOX HELICASE 56"/>
    <property type="match status" value="1"/>
</dbReference>
<dbReference type="Pfam" id="PF00270">
    <property type="entry name" value="DEAD"/>
    <property type="match status" value="1"/>
</dbReference>
<dbReference type="Pfam" id="PF00271">
    <property type="entry name" value="Helicase_C"/>
    <property type="match status" value="2"/>
</dbReference>
<dbReference type="SMART" id="SM00487">
    <property type="entry name" value="DEXDc"/>
    <property type="match status" value="1"/>
</dbReference>
<dbReference type="SMART" id="SM00490">
    <property type="entry name" value="HELICc"/>
    <property type="match status" value="1"/>
</dbReference>
<dbReference type="SUPFAM" id="SSF52540">
    <property type="entry name" value="P-loop containing nucleoside triphosphate hydrolases"/>
    <property type="match status" value="2"/>
</dbReference>
<dbReference type="PROSITE" id="PS51192">
    <property type="entry name" value="HELICASE_ATP_BIND_1"/>
    <property type="match status" value="1"/>
</dbReference>
<dbReference type="PROSITE" id="PS51194">
    <property type="entry name" value="HELICASE_CTER"/>
    <property type="match status" value="1"/>
</dbReference>
<dbReference type="PROSITE" id="PS51195">
    <property type="entry name" value="Q_MOTIF"/>
    <property type="match status" value="1"/>
</dbReference>
<name>DBP9_ASPOR</name>
<feature type="chain" id="PRO_0000232336" description="ATP-dependent RNA helicase dbp9">
    <location>
        <begin position="1"/>
        <end position="605"/>
    </location>
</feature>
<feature type="domain" description="Helicase ATP-binding" evidence="2">
    <location>
        <begin position="58"/>
        <end position="236"/>
    </location>
</feature>
<feature type="domain" description="Helicase C-terminal" evidence="3">
    <location>
        <begin position="247"/>
        <end position="469"/>
    </location>
</feature>
<feature type="region of interest" description="Disordered" evidence="4">
    <location>
        <begin position="1"/>
        <end position="30"/>
    </location>
</feature>
<feature type="region of interest" description="Disordered" evidence="4">
    <location>
        <begin position="339"/>
        <end position="373"/>
    </location>
</feature>
<feature type="region of interest" description="Disordered" evidence="4">
    <location>
        <begin position="564"/>
        <end position="605"/>
    </location>
</feature>
<feature type="short sequence motif" description="Q motif">
    <location>
        <begin position="27"/>
        <end position="55"/>
    </location>
</feature>
<feature type="short sequence motif" description="DEAD box">
    <location>
        <begin position="184"/>
        <end position="187"/>
    </location>
</feature>
<feature type="compositionally biased region" description="Basic and acidic residues" evidence="4">
    <location>
        <begin position="15"/>
        <end position="24"/>
    </location>
</feature>
<feature type="compositionally biased region" description="Acidic residues" evidence="4">
    <location>
        <begin position="350"/>
        <end position="361"/>
    </location>
</feature>
<feature type="compositionally biased region" description="Basic residues" evidence="4">
    <location>
        <begin position="572"/>
        <end position="591"/>
    </location>
</feature>
<feature type="binding site" evidence="2">
    <location>
        <begin position="71"/>
        <end position="78"/>
    </location>
    <ligand>
        <name>ATP</name>
        <dbReference type="ChEBI" id="CHEBI:30616"/>
    </ligand>
</feature>
<protein>
    <recommendedName>
        <fullName>ATP-dependent RNA helicase dbp9</fullName>
        <ecNumber>3.6.4.13</ecNumber>
    </recommendedName>
</protein>
<organism>
    <name type="scientific">Aspergillus oryzae (strain ATCC 42149 / RIB 40)</name>
    <name type="common">Yellow koji mold</name>
    <dbReference type="NCBI Taxonomy" id="510516"/>
    <lineage>
        <taxon>Eukaryota</taxon>
        <taxon>Fungi</taxon>
        <taxon>Dikarya</taxon>
        <taxon>Ascomycota</taxon>
        <taxon>Pezizomycotina</taxon>
        <taxon>Eurotiomycetes</taxon>
        <taxon>Eurotiomycetidae</taxon>
        <taxon>Eurotiales</taxon>
        <taxon>Aspergillaceae</taxon>
        <taxon>Aspergillus</taxon>
        <taxon>Aspergillus subgen. Circumdati</taxon>
    </lineage>
</organism>